<organism>
    <name type="scientific">Pseudomonas aeruginosa (strain ATCC 15692 / DSM 22644 / CIP 104116 / JCM 14847 / LMG 12228 / 1C / PRS 101 / PAO1)</name>
    <dbReference type="NCBI Taxonomy" id="208964"/>
    <lineage>
        <taxon>Bacteria</taxon>
        <taxon>Pseudomonadati</taxon>
        <taxon>Pseudomonadota</taxon>
        <taxon>Gammaproteobacteria</taxon>
        <taxon>Pseudomonadales</taxon>
        <taxon>Pseudomonadaceae</taxon>
        <taxon>Pseudomonas</taxon>
    </lineage>
</organism>
<proteinExistence type="inferred from homology"/>
<feature type="chain" id="PRO_0000380263" description="Undecaprenyl-phosphate 4-deoxy-4-formamido-L-arabinose transferase">
    <location>
        <begin position="1"/>
        <end position="339"/>
    </location>
</feature>
<feature type="transmembrane region" description="Helical" evidence="1">
    <location>
        <begin position="235"/>
        <end position="255"/>
    </location>
</feature>
<feature type="transmembrane region" description="Helical" evidence="1">
    <location>
        <begin position="269"/>
        <end position="289"/>
    </location>
</feature>
<reference key="1">
    <citation type="journal article" date="2000" name="Nature">
        <title>Complete genome sequence of Pseudomonas aeruginosa PAO1, an opportunistic pathogen.</title>
        <authorList>
            <person name="Stover C.K."/>
            <person name="Pham X.-Q.T."/>
            <person name="Erwin A.L."/>
            <person name="Mizoguchi S.D."/>
            <person name="Warrener P."/>
            <person name="Hickey M.J."/>
            <person name="Brinkman F.S.L."/>
            <person name="Hufnagle W.O."/>
            <person name="Kowalik D.J."/>
            <person name="Lagrou M."/>
            <person name="Garber R.L."/>
            <person name="Goltry L."/>
            <person name="Tolentino E."/>
            <person name="Westbrock-Wadman S."/>
            <person name="Yuan Y."/>
            <person name="Brody L.L."/>
            <person name="Coulter S.N."/>
            <person name="Folger K.R."/>
            <person name="Kas A."/>
            <person name="Larbig K."/>
            <person name="Lim R.M."/>
            <person name="Smith K.A."/>
            <person name="Spencer D.H."/>
            <person name="Wong G.K.-S."/>
            <person name="Wu Z."/>
            <person name="Paulsen I.T."/>
            <person name="Reizer J."/>
            <person name="Saier M.H. Jr."/>
            <person name="Hancock R.E.W."/>
            <person name="Lory S."/>
            <person name="Olson M.V."/>
        </authorList>
    </citation>
    <scope>NUCLEOTIDE SEQUENCE [LARGE SCALE GENOMIC DNA]</scope>
    <source>
        <strain>ATCC 15692 / DSM 22644 / CIP 104116 / JCM 14847 / LMG 12228 / 1C / PRS 101 / PAO1</strain>
    </source>
</reference>
<gene>
    <name evidence="1" type="primary">arnC</name>
    <name type="ordered locus">PA3553</name>
</gene>
<dbReference type="EC" id="2.4.2.53" evidence="1"/>
<dbReference type="EMBL" id="AE004091">
    <property type="protein sequence ID" value="AAG06941.1"/>
    <property type="molecule type" value="Genomic_DNA"/>
</dbReference>
<dbReference type="PIR" id="D83201">
    <property type="entry name" value="D83201"/>
</dbReference>
<dbReference type="RefSeq" id="NP_252243.1">
    <property type="nucleotide sequence ID" value="NC_002516.2"/>
</dbReference>
<dbReference type="RefSeq" id="WP_003112880.1">
    <property type="nucleotide sequence ID" value="NZ_QZGE01000001.1"/>
</dbReference>
<dbReference type="SMR" id="Q9HY64"/>
<dbReference type="FunCoup" id="Q9HY64">
    <property type="interactions" value="529"/>
</dbReference>
<dbReference type="STRING" id="208964.PA3553"/>
<dbReference type="CAZy" id="GT2">
    <property type="family name" value="Glycosyltransferase Family 2"/>
</dbReference>
<dbReference type="PaxDb" id="208964-PA3553"/>
<dbReference type="DNASU" id="878472"/>
<dbReference type="GeneID" id="878472"/>
<dbReference type="KEGG" id="pae:PA3553"/>
<dbReference type="PATRIC" id="fig|208964.12.peg.3718"/>
<dbReference type="PseudoCAP" id="PA3553"/>
<dbReference type="HOGENOM" id="CLU_033536_0_0_6"/>
<dbReference type="InParanoid" id="Q9HY64"/>
<dbReference type="OrthoDB" id="9811884at2"/>
<dbReference type="PhylomeDB" id="Q9HY64"/>
<dbReference type="BioCyc" id="PAER208964:G1FZ6-3621-MONOMER"/>
<dbReference type="UniPathway" id="UPA00030"/>
<dbReference type="UniPathway" id="UPA00036">
    <property type="reaction ID" value="UER00495"/>
</dbReference>
<dbReference type="Proteomes" id="UP000002438">
    <property type="component" value="Chromosome"/>
</dbReference>
<dbReference type="GO" id="GO:0005886">
    <property type="term" value="C:plasma membrane"/>
    <property type="evidence" value="ECO:0000318"/>
    <property type="project" value="GO_Central"/>
</dbReference>
<dbReference type="GO" id="GO:0016780">
    <property type="term" value="F:phosphotransferase activity, for other substituted phosphate groups"/>
    <property type="evidence" value="ECO:0007669"/>
    <property type="project" value="UniProtKB-UniRule"/>
</dbReference>
<dbReference type="GO" id="GO:0099621">
    <property type="term" value="F:undecaprenyl-phosphate 4-deoxy-4-formamido-L-arabinose transferase activity"/>
    <property type="evidence" value="ECO:0000318"/>
    <property type="project" value="GO_Central"/>
</dbReference>
<dbReference type="GO" id="GO:0036108">
    <property type="term" value="P:4-amino-4-deoxy-alpha-L-arabinopyranosyl undecaprenyl phosphate biosynthetic process"/>
    <property type="evidence" value="ECO:0007669"/>
    <property type="project" value="UniProtKB-UniRule"/>
</dbReference>
<dbReference type="GO" id="GO:0009245">
    <property type="term" value="P:lipid A biosynthetic process"/>
    <property type="evidence" value="ECO:0007669"/>
    <property type="project" value="UniProtKB-UniRule"/>
</dbReference>
<dbReference type="GO" id="GO:0009103">
    <property type="term" value="P:lipopolysaccharide biosynthetic process"/>
    <property type="evidence" value="ECO:0007669"/>
    <property type="project" value="UniProtKB-UniRule"/>
</dbReference>
<dbReference type="GO" id="GO:0046677">
    <property type="term" value="P:response to antibiotic"/>
    <property type="evidence" value="ECO:0007669"/>
    <property type="project" value="UniProtKB-KW"/>
</dbReference>
<dbReference type="CDD" id="cd04187">
    <property type="entry name" value="DPM1_like_bac"/>
    <property type="match status" value="1"/>
</dbReference>
<dbReference type="FunFam" id="3.90.550.10:FF:000019">
    <property type="entry name" value="Undecaprenyl-phosphate 4-deoxy-4-formamido-L-arabinose transferase"/>
    <property type="match status" value="1"/>
</dbReference>
<dbReference type="Gene3D" id="3.90.550.10">
    <property type="entry name" value="Spore Coat Polysaccharide Biosynthesis Protein SpsA, Chain A"/>
    <property type="match status" value="1"/>
</dbReference>
<dbReference type="HAMAP" id="MF_01164">
    <property type="entry name" value="ArnC_transfer"/>
    <property type="match status" value="1"/>
</dbReference>
<dbReference type="InterPro" id="IPR022857">
    <property type="entry name" value="ArnC_tfrase"/>
</dbReference>
<dbReference type="InterPro" id="IPR001173">
    <property type="entry name" value="Glyco_trans_2-like"/>
</dbReference>
<dbReference type="InterPro" id="IPR050256">
    <property type="entry name" value="Glycosyltransferase_2"/>
</dbReference>
<dbReference type="InterPro" id="IPR029044">
    <property type="entry name" value="Nucleotide-diphossugar_trans"/>
</dbReference>
<dbReference type="NCBIfam" id="NF007986">
    <property type="entry name" value="PRK10714.1"/>
    <property type="match status" value="1"/>
</dbReference>
<dbReference type="PANTHER" id="PTHR48090:SF3">
    <property type="entry name" value="UNDECAPRENYL-PHOSPHATE 4-DEOXY-4-FORMAMIDO-L-ARABINOSE TRANSFERASE"/>
    <property type="match status" value="1"/>
</dbReference>
<dbReference type="PANTHER" id="PTHR48090">
    <property type="entry name" value="UNDECAPRENYL-PHOSPHATE 4-DEOXY-4-FORMAMIDO-L-ARABINOSE TRANSFERASE-RELATED"/>
    <property type="match status" value="1"/>
</dbReference>
<dbReference type="Pfam" id="PF00535">
    <property type="entry name" value="Glycos_transf_2"/>
    <property type="match status" value="1"/>
</dbReference>
<dbReference type="SUPFAM" id="SSF53448">
    <property type="entry name" value="Nucleotide-diphospho-sugar transferases"/>
    <property type="match status" value="1"/>
</dbReference>
<evidence type="ECO:0000255" key="1">
    <source>
        <dbReference type="HAMAP-Rule" id="MF_01164"/>
    </source>
</evidence>
<protein>
    <recommendedName>
        <fullName evidence="1">Undecaprenyl-phosphate 4-deoxy-4-formamido-L-arabinose transferase</fullName>
        <ecNumber evidence="1">2.4.2.53</ecNumber>
    </recommendedName>
    <alternativeName>
        <fullName evidence="1">Undecaprenyl-phosphate Ara4FN transferase</fullName>
        <shortName evidence="1">Ara4FN transferase</shortName>
    </alternativeName>
</protein>
<keyword id="KW-0046">Antibiotic resistance</keyword>
<keyword id="KW-0997">Cell inner membrane</keyword>
<keyword id="KW-1003">Cell membrane</keyword>
<keyword id="KW-0328">Glycosyltransferase</keyword>
<keyword id="KW-0441">Lipid A biosynthesis</keyword>
<keyword id="KW-0444">Lipid biosynthesis</keyword>
<keyword id="KW-0443">Lipid metabolism</keyword>
<keyword id="KW-0448">Lipopolysaccharide biosynthesis</keyword>
<keyword id="KW-0472">Membrane</keyword>
<keyword id="KW-1185">Reference proteome</keyword>
<keyword id="KW-0808">Transferase</keyword>
<keyword id="KW-0812">Transmembrane</keyword>
<keyword id="KW-1133">Transmembrane helix</keyword>
<name>ARNC_PSEAE</name>
<sequence>MKPYPIDLVSVVIPVYNEEASLPELLRRTEAACLELGRAFEIVLVDDGSRDRSAELLQAAAERDGSAVVAVILNRNYGQHAAILAGFEQSRGDLVITLDADLQNPPEEIPRLVERAAQGYDVVGSIRAERQDSAWRRWPSRLVNLAVQRSTGVAMHDYGCMLRAYRRSIVEAMLACRERSTFIPILANGFARHTCEIRVAHAERAHGESKYSAMRLLNLMFDLVTCMTTTPLRLLSLVGGGMALAGFLFALFLLVLRLAFGAAWAGNGLFVLFAVLFMFSGVQLLGMGLLGEYLGRMYSDVRARPRFFIERVVRATPSALPSALQRAGFTSSSSEPSTP</sequence>
<comment type="function">
    <text evidence="1">Catalyzes the transfer of 4-deoxy-4-formamido-L-arabinose from UDP to undecaprenyl phosphate. The modified arabinose is attached to lipid A and is required for resistance to polymyxin and cationic antimicrobial peptides.</text>
</comment>
<comment type="catalytic activity">
    <reaction evidence="1">
        <text>UDP-4-deoxy-4-formamido-beta-L-arabinose + di-trans,octa-cis-undecaprenyl phosphate = 4-deoxy-4-formamido-alpha-L-arabinopyranosyl di-trans,octa-cis-undecaprenyl phosphate + UDP</text>
        <dbReference type="Rhea" id="RHEA:27722"/>
        <dbReference type="ChEBI" id="CHEBI:58223"/>
        <dbReference type="ChEBI" id="CHEBI:58709"/>
        <dbReference type="ChEBI" id="CHEBI:58909"/>
        <dbReference type="ChEBI" id="CHEBI:60392"/>
        <dbReference type="EC" id="2.4.2.53"/>
    </reaction>
</comment>
<comment type="pathway">
    <text evidence="1">Glycolipid biosynthesis; 4-amino-4-deoxy-alpha-L-arabinose undecaprenyl phosphate biosynthesis; 4-amino-4-deoxy-alpha-L-arabinose undecaprenyl phosphate from UDP-4-deoxy-4-formamido-beta-L-arabinose and undecaprenyl phosphate: step 1/2.</text>
</comment>
<comment type="pathway">
    <text evidence="1">Bacterial outer membrane biogenesis; lipopolysaccharide biosynthesis.</text>
</comment>
<comment type="subcellular location">
    <subcellularLocation>
        <location evidence="1">Cell inner membrane</location>
        <topology evidence="1">Multi-pass membrane protein</topology>
    </subcellularLocation>
</comment>
<comment type="similarity">
    <text evidence="1">Belongs to the glycosyltransferase 2 family.</text>
</comment>
<accession>Q9HY64</accession>